<proteinExistence type="inferred from homology"/>
<gene>
    <name evidence="1" type="primary">rpsS</name>
    <name type="ordered locus">BbuZS7_0493</name>
</gene>
<evidence type="ECO:0000255" key="1">
    <source>
        <dbReference type="HAMAP-Rule" id="MF_00531"/>
    </source>
</evidence>
<evidence type="ECO:0000305" key="2"/>
<keyword id="KW-0687">Ribonucleoprotein</keyword>
<keyword id="KW-0689">Ribosomal protein</keyword>
<keyword id="KW-0694">RNA-binding</keyword>
<keyword id="KW-0699">rRNA-binding</keyword>
<dbReference type="EMBL" id="CP001205">
    <property type="protein sequence ID" value="ACK74437.1"/>
    <property type="molecule type" value="Genomic_DNA"/>
</dbReference>
<dbReference type="RefSeq" id="WP_002557073.1">
    <property type="nucleotide sequence ID" value="NC_011728.1"/>
</dbReference>
<dbReference type="SMR" id="B7J247"/>
<dbReference type="GeneID" id="83865957"/>
<dbReference type="KEGG" id="bbz:BbuZS7_0493"/>
<dbReference type="HOGENOM" id="CLU_144911_0_1_12"/>
<dbReference type="Proteomes" id="UP000006901">
    <property type="component" value="Chromosome"/>
</dbReference>
<dbReference type="GO" id="GO:0005737">
    <property type="term" value="C:cytoplasm"/>
    <property type="evidence" value="ECO:0007669"/>
    <property type="project" value="UniProtKB-ARBA"/>
</dbReference>
<dbReference type="GO" id="GO:0015935">
    <property type="term" value="C:small ribosomal subunit"/>
    <property type="evidence" value="ECO:0007669"/>
    <property type="project" value="InterPro"/>
</dbReference>
<dbReference type="GO" id="GO:0019843">
    <property type="term" value="F:rRNA binding"/>
    <property type="evidence" value="ECO:0007669"/>
    <property type="project" value="UniProtKB-UniRule"/>
</dbReference>
<dbReference type="GO" id="GO:0003735">
    <property type="term" value="F:structural constituent of ribosome"/>
    <property type="evidence" value="ECO:0007669"/>
    <property type="project" value="InterPro"/>
</dbReference>
<dbReference type="GO" id="GO:0000028">
    <property type="term" value="P:ribosomal small subunit assembly"/>
    <property type="evidence" value="ECO:0007669"/>
    <property type="project" value="TreeGrafter"/>
</dbReference>
<dbReference type="GO" id="GO:0006412">
    <property type="term" value="P:translation"/>
    <property type="evidence" value="ECO:0007669"/>
    <property type="project" value="UniProtKB-UniRule"/>
</dbReference>
<dbReference type="FunFam" id="3.30.860.10:FF:000001">
    <property type="entry name" value="30S ribosomal protein S19"/>
    <property type="match status" value="1"/>
</dbReference>
<dbReference type="Gene3D" id="3.30.860.10">
    <property type="entry name" value="30s Ribosomal Protein S19, Chain A"/>
    <property type="match status" value="1"/>
</dbReference>
<dbReference type="HAMAP" id="MF_00531">
    <property type="entry name" value="Ribosomal_uS19"/>
    <property type="match status" value="1"/>
</dbReference>
<dbReference type="InterPro" id="IPR002222">
    <property type="entry name" value="Ribosomal_uS19"/>
</dbReference>
<dbReference type="InterPro" id="IPR005732">
    <property type="entry name" value="Ribosomal_uS19_bac-type"/>
</dbReference>
<dbReference type="InterPro" id="IPR020934">
    <property type="entry name" value="Ribosomal_uS19_CS"/>
</dbReference>
<dbReference type="InterPro" id="IPR023575">
    <property type="entry name" value="Ribosomal_uS19_SF"/>
</dbReference>
<dbReference type="NCBIfam" id="TIGR01050">
    <property type="entry name" value="rpsS_bact"/>
    <property type="match status" value="1"/>
</dbReference>
<dbReference type="PANTHER" id="PTHR11880">
    <property type="entry name" value="RIBOSOMAL PROTEIN S19P FAMILY MEMBER"/>
    <property type="match status" value="1"/>
</dbReference>
<dbReference type="PANTHER" id="PTHR11880:SF8">
    <property type="entry name" value="SMALL RIBOSOMAL SUBUNIT PROTEIN US19M"/>
    <property type="match status" value="1"/>
</dbReference>
<dbReference type="Pfam" id="PF00203">
    <property type="entry name" value="Ribosomal_S19"/>
    <property type="match status" value="1"/>
</dbReference>
<dbReference type="PIRSF" id="PIRSF002144">
    <property type="entry name" value="Ribosomal_S19"/>
    <property type="match status" value="1"/>
</dbReference>
<dbReference type="PRINTS" id="PR00975">
    <property type="entry name" value="RIBOSOMALS19"/>
</dbReference>
<dbReference type="SUPFAM" id="SSF54570">
    <property type="entry name" value="Ribosomal protein S19"/>
    <property type="match status" value="1"/>
</dbReference>
<dbReference type="PROSITE" id="PS00323">
    <property type="entry name" value="RIBOSOMAL_S19"/>
    <property type="match status" value="1"/>
</dbReference>
<organism>
    <name type="scientific">Borreliella burgdorferi (strain ZS7)</name>
    <name type="common">Borrelia burgdorferi</name>
    <dbReference type="NCBI Taxonomy" id="445985"/>
    <lineage>
        <taxon>Bacteria</taxon>
        <taxon>Pseudomonadati</taxon>
        <taxon>Spirochaetota</taxon>
        <taxon>Spirochaetia</taxon>
        <taxon>Spirochaetales</taxon>
        <taxon>Borreliaceae</taxon>
        <taxon>Borreliella</taxon>
    </lineage>
</organism>
<name>RS19_BORBZ</name>
<comment type="function">
    <text evidence="1">Protein S19 forms a complex with S13 that binds strongly to the 16S ribosomal RNA.</text>
</comment>
<comment type="similarity">
    <text evidence="1">Belongs to the universal ribosomal protein uS19 family.</text>
</comment>
<protein>
    <recommendedName>
        <fullName evidence="1">Small ribosomal subunit protein uS19</fullName>
    </recommendedName>
    <alternativeName>
        <fullName evidence="2">30S ribosomal protein S19</fullName>
    </alternativeName>
</protein>
<sequence length="92" mass="10410">MARSIKKGPFIEKSLYQKVLSSFGSEKRVVIKTYSRSSTIIPEMVSLTISVYNGKTFIPIYITEDLVGHKLGEFSPTRIFRGHAKSDKKGRK</sequence>
<reference key="1">
    <citation type="journal article" date="2011" name="J. Bacteriol.">
        <title>Whole-genome sequences of thirteen isolates of Borrelia burgdorferi.</title>
        <authorList>
            <person name="Schutzer S.E."/>
            <person name="Fraser-Liggett C.M."/>
            <person name="Casjens S.R."/>
            <person name="Qiu W.G."/>
            <person name="Dunn J.J."/>
            <person name="Mongodin E.F."/>
            <person name="Luft B.J."/>
        </authorList>
    </citation>
    <scope>NUCLEOTIDE SEQUENCE [LARGE SCALE GENOMIC DNA]</scope>
    <source>
        <strain>ZS7</strain>
    </source>
</reference>
<accession>B7J247</accession>
<feature type="chain" id="PRO_1000127932" description="Small ribosomal subunit protein uS19">
    <location>
        <begin position="1"/>
        <end position="92"/>
    </location>
</feature>